<feature type="chain" id="PRO_0000323120" description="Small ribosomal subunit protein uS5">
    <location>
        <begin position="1"/>
        <end position="171"/>
    </location>
</feature>
<feature type="domain" description="S5 DRBM" evidence="1">
    <location>
        <begin position="13"/>
        <end position="76"/>
    </location>
</feature>
<evidence type="ECO:0000255" key="1">
    <source>
        <dbReference type="HAMAP-Rule" id="MF_01307"/>
    </source>
</evidence>
<evidence type="ECO:0000305" key="2"/>
<proteinExistence type="inferred from homology"/>
<keyword id="KW-1185">Reference proteome</keyword>
<keyword id="KW-0687">Ribonucleoprotein</keyword>
<keyword id="KW-0689">Ribosomal protein</keyword>
<keyword id="KW-0694">RNA-binding</keyword>
<keyword id="KW-0699">rRNA-binding</keyword>
<name>RS5_DICNV</name>
<gene>
    <name evidence="1" type="primary">rpsE</name>
    <name type="ordered locus">DNO_1258</name>
</gene>
<organism>
    <name type="scientific">Dichelobacter nodosus (strain VCS1703A)</name>
    <dbReference type="NCBI Taxonomy" id="246195"/>
    <lineage>
        <taxon>Bacteria</taxon>
        <taxon>Pseudomonadati</taxon>
        <taxon>Pseudomonadota</taxon>
        <taxon>Gammaproteobacteria</taxon>
        <taxon>Cardiobacteriales</taxon>
        <taxon>Cardiobacteriaceae</taxon>
        <taxon>Dichelobacter</taxon>
    </lineage>
</organism>
<accession>A5EXA1</accession>
<reference key="1">
    <citation type="journal article" date="2007" name="Nat. Biotechnol.">
        <title>Genome sequence and identification of candidate vaccine antigens from the animal pathogen Dichelobacter nodosus.</title>
        <authorList>
            <person name="Myers G.S.A."/>
            <person name="Parker D."/>
            <person name="Al-Hasani K."/>
            <person name="Kennan R.M."/>
            <person name="Seemann T."/>
            <person name="Ren Q."/>
            <person name="Badger J.H."/>
            <person name="Selengut J.D."/>
            <person name="Deboy R.T."/>
            <person name="Tettelin H."/>
            <person name="Boyce J.D."/>
            <person name="McCarl V.P."/>
            <person name="Han X."/>
            <person name="Nelson W.C."/>
            <person name="Madupu R."/>
            <person name="Mohamoud Y."/>
            <person name="Holley T."/>
            <person name="Fedorova N."/>
            <person name="Khouri H."/>
            <person name="Bottomley S.P."/>
            <person name="Whittington R.J."/>
            <person name="Adler B."/>
            <person name="Songer J.G."/>
            <person name="Rood J.I."/>
            <person name="Paulsen I.T."/>
        </authorList>
    </citation>
    <scope>NUCLEOTIDE SEQUENCE [LARGE SCALE GENOMIC DNA]</scope>
    <source>
        <strain>VCS1703A</strain>
    </source>
</reference>
<comment type="function">
    <text evidence="1">With S4 and S12 plays an important role in translational accuracy.</text>
</comment>
<comment type="function">
    <text evidence="1">Located at the back of the 30S subunit body where it stabilizes the conformation of the head with respect to the body.</text>
</comment>
<comment type="subunit">
    <text evidence="1">Part of the 30S ribosomal subunit. Contacts proteins S4 and S8.</text>
</comment>
<comment type="domain">
    <text>The N-terminal domain interacts with the head of the 30S subunit; the C-terminal domain interacts with the body and contacts protein S4. The interaction surface between S4 and S5 is involved in control of translational fidelity.</text>
</comment>
<comment type="similarity">
    <text evidence="1">Belongs to the universal ribosomal protein uS5 family.</text>
</comment>
<protein>
    <recommendedName>
        <fullName evidence="1">Small ribosomal subunit protein uS5</fullName>
    </recommendedName>
    <alternativeName>
        <fullName evidence="2">30S ribosomal protein S5</fullName>
    </alternativeName>
</protein>
<dbReference type="EMBL" id="CP000513">
    <property type="protein sequence ID" value="ABQ13543.1"/>
    <property type="molecule type" value="Genomic_DNA"/>
</dbReference>
<dbReference type="RefSeq" id="WP_012031553.1">
    <property type="nucleotide sequence ID" value="NC_009446.1"/>
</dbReference>
<dbReference type="SMR" id="A5EXA1"/>
<dbReference type="STRING" id="246195.DNO_1258"/>
<dbReference type="KEGG" id="dno:DNO_1258"/>
<dbReference type="eggNOG" id="COG0098">
    <property type="taxonomic scope" value="Bacteria"/>
</dbReference>
<dbReference type="HOGENOM" id="CLU_065898_2_2_6"/>
<dbReference type="OrthoDB" id="9809045at2"/>
<dbReference type="Proteomes" id="UP000000248">
    <property type="component" value="Chromosome"/>
</dbReference>
<dbReference type="GO" id="GO:0015935">
    <property type="term" value="C:small ribosomal subunit"/>
    <property type="evidence" value="ECO:0007669"/>
    <property type="project" value="InterPro"/>
</dbReference>
<dbReference type="GO" id="GO:0019843">
    <property type="term" value="F:rRNA binding"/>
    <property type="evidence" value="ECO:0007669"/>
    <property type="project" value="UniProtKB-UniRule"/>
</dbReference>
<dbReference type="GO" id="GO:0003735">
    <property type="term" value="F:structural constituent of ribosome"/>
    <property type="evidence" value="ECO:0007669"/>
    <property type="project" value="InterPro"/>
</dbReference>
<dbReference type="GO" id="GO:0006412">
    <property type="term" value="P:translation"/>
    <property type="evidence" value="ECO:0007669"/>
    <property type="project" value="UniProtKB-UniRule"/>
</dbReference>
<dbReference type="FunFam" id="3.30.160.20:FF:000001">
    <property type="entry name" value="30S ribosomal protein S5"/>
    <property type="match status" value="1"/>
</dbReference>
<dbReference type="FunFam" id="3.30.230.10:FF:000002">
    <property type="entry name" value="30S ribosomal protein S5"/>
    <property type="match status" value="1"/>
</dbReference>
<dbReference type="Gene3D" id="3.30.160.20">
    <property type="match status" value="1"/>
</dbReference>
<dbReference type="Gene3D" id="3.30.230.10">
    <property type="match status" value="1"/>
</dbReference>
<dbReference type="HAMAP" id="MF_01307_B">
    <property type="entry name" value="Ribosomal_uS5_B"/>
    <property type="match status" value="1"/>
</dbReference>
<dbReference type="InterPro" id="IPR020568">
    <property type="entry name" value="Ribosomal_Su5_D2-typ_SF"/>
</dbReference>
<dbReference type="InterPro" id="IPR000851">
    <property type="entry name" value="Ribosomal_uS5"/>
</dbReference>
<dbReference type="InterPro" id="IPR005712">
    <property type="entry name" value="Ribosomal_uS5_bac-type"/>
</dbReference>
<dbReference type="InterPro" id="IPR005324">
    <property type="entry name" value="Ribosomal_uS5_C"/>
</dbReference>
<dbReference type="InterPro" id="IPR013810">
    <property type="entry name" value="Ribosomal_uS5_N"/>
</dbReference>
<dbReference type="InterPro" id="IPR018192">
    <property type="entry name" value="Ribosomal_uS5_N_CS"/>
</dbReference>
<dbReference type="InterPro" id="IPR014721">
    <property type="entry name" value="Ribsml_uS5_D2-typ_fold_subgr"/>
</dbReference>
<dbReference type="NCBIfam" id="TIGR01021">
    <property type="entry name" value="rpsE_bact"/>
    <property type="match status" value="1"/>
</dbReference>
<dbReference type="PANTHER" id="PTHR48277">
    <property type="entry name" value="MITOCHONDRIAL RIBOSOMAL PROTEIN S5"/>
    <property type="match status" value="1"/>
</dbReference>
<dbReference type="PANTHER" id="PTHR48277:SF1">
    <property type="entry name" value="MITOCHONDRIAL RIBOSOMAL PROTEIN S5"/>
    <property type="match status" value="1"/>
</dbReference>
<dbReference type="Pfam" id="PF00333">
    <property type="entry name" value="Ribosomal_S5"/>
    <property type="match status" value="1"/>
</dbReference>
<dbReference type="Pfam" id="PF03719">
    <property type="entry name" value="Ribosomal_S5_C"/>
    <property type="match status" value="1"/>
</dbReference>
<dbReference type="SUPFAM" id="SSF54768">
    <property type="entry name" value="dsRNA-binding domain-like"/>
    <property type="match status" value="1"/>
</dbReference>
<dbReference type="SUPFAM" id="SSF54211">
    <property type="entry name" value="Ribosomal protein S5 domain 2-like"/>
    <property type="match status" value="1"/>
</dbReference>
<dbReference type="PROSITE" id="PS00585">
    <property type="entry name" value="RIBOSOMAL_S5"/>
    <property type="match status" value="1"/>
</dbReference>
<dbReference type="PROSITE" id="PS50881">
    <property type="entry name" value="S5_DSRBD"/>
    <property type="match status" value="1"/>
</dbReference>
<sequence length="171" mass="18171">MAQQKEHQQESEFLERLVAVNRVTKVVKGGRQFAFAALVVIGDGKGKVGYGYGKAKEVPVAIQKAMDQAKKNLVTIALNKDTLQHAITGHHGAARVFMQPASEGTGIIAGGAMRAVFDVVGVKDVLAKCQGTRNPGNVIRATINALTSMATPEKVAAKRGKSVEEILSHVQ</sequence>